<reference key="1">
    <citation type="journal article" date="1998" name="Yeast">
        <title>Characterization of a second gene (ZSOD22) of Na+/H+ antiporter from salt-tolerant yeast Zygosaccharomyces rouxii and functional expression of ZSOD2 and ZSOD22 in Saccharomyces cerevisiae.</title>
        <authorList>
            <person name="Iwaki T."/>
            <person name="Higashida Y."/>
            <person name="Tsuji H."/>
            <person name="Tamai Y."/>
            <person name="Watanabe Y."/>
        </authorList>
    </citation>
    <scope>NUCLEOTIDE SEQUENCE [GENOMIC DNA]</scope>
    <source>
        <strain>ATCC 42981 / IAM 12879 / JCM 22060 / S-96</strain>
    </source>
</reference>
<sequence length="808" mass="90198">MAWSQLEVTKAHVAYSCVGIFSSIFSLVSLFVKEQLYIGESMVASIFGLIVGPHCLNWFNPLSWGNTDSITLEISRILLCLQVFAVSVELPRKYMLKHWVSVTMLLVPVMTSGWLVIALFVWILVPGLNFPASLLMGACITATDPVLAQSVVSGTFAQKVPGHLRNLLSCESGCNDGLAIPFVFLSLDLLLYPGRGGQIVKDWICVTILWECIFGSILGCIIGYCGRKAIRFAEGRHIIDRESFLAFYLILALTCAGFGSMLGVDDLLVSFFAGTAFAWDGWFAAKTHESNVSNVIDVLLNYAYFVYLGSILPWKDFNNPDIGLDVWRLILLSLVVIFLRRIPAVLSLKPLIPDIKSWREAMFIGHFGPIGVGAVFAAITSKSQLESHLTNEETPLKDTPGRGSKHWQVMACIWPITCFSIMTSVIVHGSSVAVIMLGRYLSTVTLMALPTGRTTNTKNAWLERLPALDKSGRPFSLQRLDKEPSLSPGQIGGRTSGMVATPKLGMRQRWRQKLQDNKEIEPDIEMNNFCQGTFQIRKETHASTNDSHGTTTANLGTSNGRAQGLPWRSKMNIIDRAEAVNTIYGLDKLAEDTENKDVWRVNTSRIPGIRSPYDDVYTYQSDSSSIGSIERQRIKSLREQEQQAYIAYTEDDQVIIENRQGEILEYVKFHKEGLGDAESGLHNHDRPKRAISPPLEKLHQITNEARKNKYYAYKVGNDLVIEDESGEVFRRYRISPHGGKRKIKKIINPVSSVLSSVGITKPRGVSERINHYLLHSEDEMADDEAESENDMDYEDSDGPASRFKDHAD</sequence>
<evidence type="ECO:0000255" key="1"/>
<evidence type="ECO:0000256" key="2">
    <source>
        <dbReference type="SAM" id="MobiDB-lite"/>
    </source>
</evidence>
<evidence type="ECO:0000305" key="3"/>
<protein>
    <recommendedName>
        <fullName>Na(+)/H(+) antiporter 2</fullName>
    </recommendedName>
</protein>
<proteinExistence type="inferred from homology"/>
<keyword id="KW-0050">Antiport</keyword>
<keyword id="KW-0325">Glycoprotein</keyword>
<keyword id="KW-0406">Ion transport</keyword>
<keyword id="KW-0472">Membrane</keyword>
<keyword id="KW-0915">Sodium</keyword>
<keyword id="KW-0739">Sodium transport</keyword>
<keyword id="KW-0812">Transmembrane</keyword>
<keyword id="KW-1133">Transmembrane helix</keyword>
<keyword id="KW-0813">Transport</keyword>
<name>NAH2_ZYGRO</name>
<gene>
    <name type="primary">SOD22</name>
</gene>
<feature type="chain" id="PRO_0000052409" description="Na(+)/H(+) antiporter 2">
    <location>
        <begin position="1"/>
        <end position="808"/>
    </location>
</feature>
<feature type="transmembrane region" description="Helical" evidence="1">
    <location>
        <begin position="12"/>
        <end position="32"/>
    </location>
</feature>
<feature type="transmembrane region" description="Helical" evidence="1">
    <location>
        <begin position="36"/>
        <end position="56"/>
    </location>
</feature>
<feature type="transmembrane region" description="Helical" evidence="1">
    <location>
        <begin position="70"/>
        <end position="90"/>
    </location>
</feature>
<feature type="transmembrane region" description="Helical" evidence="1">
    <location>
        <begin position="105"/>
        <end position="125"/>
    </location>
</feature>
<feature type="transmembrane region" description="Helical" evidence="1">
    <location>
        <begin position="128"/>
        <end position="148"/>
    </location>
</feature>
<feature type="transmembrane region" description="Helical" evidence="1">
    <location>
        <begin position="174"/>
        <end position="194"/>
    </location>
</feature>
<feature type="transmembrane region" description="Helical" evidence="1">
    <location>
        <begin position="203"/>
        <end position="223"/>
    </location>
</feature>
<feature type="transmembrane region" description="Helical" evidence="1">
    <location>
        <begin position="244"/>
        <end position="264"/>
    </location>
</feature>
<feature type="transmembrane region" description="Helical" evidence="1">
    <location>
        <begin position="267"/>
        <end position="287"/>
    </location>
</feature>
<feature type="transmembrane region" description="Helical" evidence="1">
    <location>
        <begin position="294"/>
        <end position="314"/>
    </location>
</feature>
<feature type="transmembrane region" description="Helical" evidence="1">
    <location>
        <begin position="319"/>
        <end position="339"/>
    </location>
</feature>
<feature type="transmembrane region" description="Helical" evidence="1">
    <location>
        <begin position="361"/>
        <end position="381"/>
    </location>
</feature>
<feature type="transmembrane region" description="Helical" evidence="1">
    <location>
        <begin position="409"/>
        <end position="429"/>
    </location>
</feature>
<feature type="transmembrane region" description="Helical" evidence="1">
    <location>
        <begin position="432"/>
        <end position="452"/>
    </location>
</feature>
<feature type="region of interest" description="Disordered" evidence="2">
    <location>
        <begin position="478"/>
        <end position="499"/>
    </location>
</feature>
<feature type="region of interest" description="Disordered" evidence="2">
    <location>
        <begin position="541"/>
        <end position="562"/>
    </location>
</feature>
<feature type="region of interest" description="Disordered" evidence="2">
    <location>
        <begin position="774"/>
        <end position="808"/>
    </location>
</feature>
<feature type="compositionally biased region" description="Polar residues" evidence="2">
    <location>
        <begin position="542"/>
        <end position="561"/>
    </location>
</feature>
<feature type="compositionally biased region" description="Acidic residues" evidence="2">
    <location>
        <begin position="779"/>
        <end position="797"/>
    </location>
</feature>
<feature type="glycosylation site" description="N-linked (GlcNAc...) asparagine" evidence="1">
    <location>
        <position position="291"/>
    </location>
</feature>
<feature type="glycosylation site" description="N-linked (GlcNAc...) asparagine" evidence="1">
    <location>
        <position position="545"/>
    </location>
</feature>
<feature type="glycosylation site" description="N-linked (GlcNAc...) asparagine" evidence="1">
    <location>
        <position position="602"/>
    </location>
</feature>
<comment type="function">
    <text>Sodium export from cell, takes up external protons in exchange for internal sodium ions. Seems to be poorly expressed.</text>
</comment>
<comment type="subcellular location">
    <subcellularLocation>
        <location>Membrane</location>
        <topology>Multi-pass membrane protein</topology>
    </subcellularLocation>
</comment>
<comment type="similarity">
    <text evidence="3">Belongs to the fungal Na(+)/H(+) exchanger family.</text>
</comment>
<accession>O42701</accession>
<dbReference type="EMBL" id="AB010106">
    <property type="protein sequence ID" value="BAA24268.1"/>
    <property type="molecule type" value="Genomic_DNA"/>
</dbReference>
<dbReference type="SMR" id="O42701"/>
<dbReference type="TCDB" id="2.A.36.4.2">
    <property type="family name" value="the monovalent cation:proton antiporter-1 (cpa1) family"/>
</dbReference>
<dbReference type="GlyCosmos" id="O42701">
    <property type="glycosylation" value="3 sites, No reported glycans"/>
</dbReference>
<dbReference type="GO" id="GO:0005886">
    <property type="term" value="C:plasma membrane"/>
    <property type="evidence" value="ECO:0007669"/>
    <property type="project" value="InterPro"/>
</dbReference>
<dbReference type="GO" id="GO:0015079">
    <property type="term" value="F:potassium ion transmembrane transporter activity"/>
    <property type="evidence" value="ECO:0007669"/>
    <property type="project" value="InterPro"/>
</dbReference>
<dbReference type="GO" id="GO:0015385">
    <property type="term" value="F:sodium:proton antiporter activity"/>
    <property type="evidence" value="ECO:0007669"/>
    <property type="project" value="InterPro"/>
</dbReference>
<dbReference type="GO" id="GO:0030007">
    <property type="term" value="P:intracellular potassium ion homeostasis"/>
    <property type="evidence" value="ECO:0007669"/>
    <property type="project" value="TreeGrafter"/>
</dbReference>
<dbReference type="GO" id="GO:0120029">
    <property type="term" value="P:proton export across plasma membrane"/>
    <property type="evidence" value="ECO:0007669"/>
    <property type="project" value="InterPro"/>
</dbReference>
<dbReference type="GO" id="GO:0042391">
    <property type="term" value="P:regulation of membrane potential"/>
    <property type="evidence" value="ECO:0007669"/>
    <property type="project" value="InterPro"/>
</dbReference>
<dbReference type="GO" id="GO:0036376">
    <property type="term" value="P:sodium ion export across plasma membrane"/>
    <property type="evidence" value="ECO:0007669"/>
    <property type="project" value="InterPro"/>
</dbReference>
<dbReference type="FunFam" id="1.20.1530.20:FF:000015">
    <property type="entry name" value="Na(+)/H(+) antiporter 2"/>
    <property type="match status" value="1"/>
</dbReference>
<dbReference type="Gene3D" id="1.20.1530.20">
    <property type="match status" value="1"/>
</dbReference>
<dbReference type="InterPro" id="IPR013928">
    <property type="entry name" value="Cation/H_antiporter_C"/>
</dbReference>
<dbReference type="InterPro" id="IPR006153">
    <property type="entry name" value="Cation/H_exchanger_TM"/>
</dbReference>
<dbReference type="InterPro" id="IPR004712">
    <property type="entry name" value="Na+/H+_antiporter_fungi"/>
</dbReference>
<dbReference type="InterPro" id="IPR038770">
    <property type="entry name" value="Na+/solute_symporter_sf"/>
</dbReference>
<dbReference type="InterPro" id="IPR032516">
    <property type="entry name" value="Nha1"/>
</dbReference>
<dbReference type="NCBIfam" id="TIGR00844">
    <property type="entry name" value="c_cpa1"/>
    <property type="match status" value="1"/>
</dbReference>
<dbReference type="PANTHER" id="PTHR31382">
    <property type="entry name" value="NA(+)/H(+) ANTIPORTER"/>
    <property type="match status" value="1"/>
</dbReference>
<dbReference type="PANTHER" id="PTHR31382:SF4">
    <property type="entry name" value="NA(+)_H(+) ANTIPORTER"/>
    <property type="match status" value="1"/>
</dbReference>
<dbReference type="Pfam" id="PF00999">
    <property type="entry name" value="Na_H_Exchanger"/>
    <property type="match status" value="1"/>
</dbReference>
<dbReference type="Pfam" id="PF08619">
    <property type="entry name" value="Nha1_C"/>
    <property type="match status" value="1"/>
</dbReference>
<organism>
    <name type="scientific">Zygosaccharomyces rouxii</name>
    <dbReference type="NCBI Taxonomy" id="4956"/>
    <lineage>
        <taxon>Eukaryota</taxon>
        <taxon>Fungi</taxon>
        <taxon>Dikarya</taxon>
        <taxon>Ascomycota</taxon>
        <taxon>Saccharomycotina</taxon>
        <taxon>Saccharomycetes</taxon>
        <taxon>Saccharomycetales</taxon>
        <taxon>Saccharomycetaceae</taxon>
        <taxon>Zygosaccharomyces</taxon>
    </lineage>
</organism>